<dbReference type="EMBL" id="CP001638">
    <property type="protein sequence ID" value="ACS23063.1"/>
    <property type="molecule type" value="Genomic_DNA"/>
</dbReference>
<dbReference type="SMR" id="C5D3S9"/>
<dbReference type="STRING" id="471223.GWCH70_0123"/>
<dbReference type="KEGG" id="gwc:GWCH70_0123"/>
<dbReference type="eggNOG" id="COG0094">
    <property type="taxonomic scope" value="Bacteria"/>
</dbReference>
<dbReference type="HOGENOM" id="CLU_061015_2_1_9"/>
<dbReference type="OrthoDB" id="9806626at2"/>
<dbReference type="GO" id="GO:1990904">
    <property type="term" value="C:ribonucleoprotein complex"/>
    <property type="evidence" value="ECO:0007669"/>
    <property type="project" value="UniProtKB-KW"/>
</dbReference>
<dbReference type="GO" id="GO:0005840">
    <property type="term" value="C:ribosome"/>
    <property type="evidence" value="ECO:0007669"/>
    <property type="project" value="UniProtKB-KW"/>
</dbReference>
<dbReference type="GO" id="GO:0019843">
    <property type="term" value="F:rRNA binding"/>
    <property type="evidence" value="ECO:0007669"/>
    <property type="project" value="UniProtKB-UniRule"/>
</dbReference>
<dbReference type="GO" id="GO:0003735">
    <property type="term" value="F:structural constituent of ribosome"/>
    <property type="evidence" value="ECO:0007669"/>
    <property type="project" value="InterPro"/>
</dbReference>
<dbReference type="GO" id="GO:0000049">
    <property type="term" value="F:tRNA binding"/>
    <property type="evidence" value="ECO:0007669"/>
    <property type="project" value="UniProtKB-UniRule"/>
</dbReference>
<dbReference type="GO" id="GO:0006412">
    <property type="term" value="P:translation"/>
    <property type="evidence" value="ECO:0007669"/>
    <property type="project" value="UniProtKB-UniRule"/>
</dbReference>
<dbReference type="FunFam" id="3.30.1440.10:FF:000001">
    <property type="entry name" value="50S ribosomal protein L5"/>
    <property type="match status" value="1"/>
</dbReference>
<dbReference type="Gene3D" id="3.30.1440.10">
    <property type="match status" value="1"/>
</dbReference>
<dbReference type="HAMAP" id="MF_01333_B">
    <property type="entry name" value="Ribosomal_uL5_B"/>
    <property type="match status" value="1"/>
</dbReference>
<dbReference type="InterPro" id="IPR002132">
    <property type="entry name" value="Ribosomal_uL5"/>
</dbReference>
<dbReference type="InterPro" id="IPR020930">
    <property type="entry name" value="Ribosomal_uL5_bac-type"/>
</dbReference>
<dbReference type="InterPro" id="IPR031309">
    <property type="entry name" value="Ribosomal_uL5_C"/>
</dbReference>
<dbReference type="InterPro" id="IPR020929">
    <property type="entry name" value="Ribosomal_uL5_CS"/>
</dbReference>
<dbReference type="InterPro" id="IPR022803">
    <property type="entry name" value="Ribosomal_uL5_dom_sf"/>
</dbReference>
<dbReference type="InterPro" id="IPR031310">
    <property type="entry name" value="Ribosomal_uL5_N"/>
</dbReference>
<dbReference type="NCBIfam" id="NF000585">
    <property type="entry name" value="PRK00010.1"/>
    <property type="match status" value="1"/>
</dbReference>
<dbReference type="PANTHER" id="PTHR11994">
    <property type="entry name" value="60S RIBOSOMAL PROTEIN L11-RELATED"/>
    <property type="match status" value="1"/>
</dbReference>
<dbReference type="Pfam" id="PF00281">
    <property type="entry name" value="Ribosomal_L5"/>
    <property type="match status" value="1"/>
</dbReference>
<dbReference type="Pfam" id="PF00673">
    <property type="entry name" value="Ribosomal_L5_C"/>
    <property type="match status" value="1"/>
</dbReference>
<dbReference type="PIRSF" id="PIRSF002161">
    <property type="entry name" value="Ribosomal_L5"/>
    <property type="match status" value="1"/>
</dbReference>
<dbReference type="SUPFAM" id="SSF55282">
    <property type="entry name" value="RL5-like"/>
    <property type="match status" value="1"/>
</dbReference>
<dbReference type="PROSITE" id="PS00358">
    <property type="entry name" value="RIBOSOMAL_L5"/>
    <property type="match status" value="1"/>
</dbReference>
<proteinExistence type="inferred from homology"/>
<organism>
    <name type="scientific">Geobacillus sp. (strain WCH70)</name>
    <dbReference type="NCBI Taxonomy" id="471223"/>
    <lineage>
        <taxon>Bacteria</taxon>
        <taxon>Bacillati</taxon>
        <taxon>Bacillota</taxon>
        <taxon>Bacilli</taxon>
        <taxon>Bacillales</taxon>
        <taxon>Anoxybacillaceae</taxon>
        <taxon>Geobacillus</taxon>
    </lineage>
</organism>
<reference key="1">
    <citation type="submission" date="2009-06" db="EMBL/GenBank/DDBJ databases">
        <title>Complete sequence of chromosome of Geopacillus sp. WCH70.</title>
        <authorList>
            <consortium name="US DOE Joint Genome Institute"/>
            <person name="Lucas S."/>
            <person name="Copeland A."/>
            <person name="Lapidus A."/>
            <person name="Glavina del Rio T."/>
            <person name="Dalin E."/>
            <person name="Tice H."/>
            <person name="Bruce D."/>
            <person name="Goodwin L."/>
            <person name="Pitluck S."/>
            <person name="Chertkov O."/>
            <person name="Brettin T."/>
            <person name="Detter J.C."/>
            <person name="Han C."/>
            <person name="Larimer F."/>
            <person name="Land M."/>
            <person name="Hauser L."/>
            <person name="Kyrpides N."/>
            <person name="Mikhailova N."/>
            <person name="Brumm P."/>
            <person name="Mead D.A."/>
            <person name="Richardson P."/>
        </authorList>
    </citation>
    <scope>NUCLEOTIDE SEQUENCE [LARGE SCALE GENOMIC DNA]</scope>
    <source>
        <strain>WCH70</strain>
    </source>
</reference>
<comment type="function">
    <text evidence="1">This is one of the proteins that bind and probably mediate the attachment of the 5S RNA into the large ribosomal subunit, where it forms part of the central protuberance. In the 70S ribosome it contacts protein S13 of the 30S subunit (bridge B1b), connecting the 2 subunits; this bridge is implicated in subunit movement. Contacts the P site tRNA; the 5S rRNA and some of its associated proteins might help stabilize positioning of ribosome-bound tRNAs.</text>
</comment>
<comment type="subunit">
    <text evidence="1">Part of the 50S ribosomal subunit; part of the 5S rRNA/L5/L18/L25 subcomplex. Contacts the 5S rRNA and the P site tRNA. Forms a bridge to the 30S subunit in the 70S ribosome.</text>
</comment>
<comment type="similarity">
    <text evidence="1">Belongs to the universal ribosomal protein uL5 family.</text>
</comment>
<keyword id="KW-0687">Ribonucleoprotein</keyword>
<keyword id="KW-0689">Ribosomal protein</keyword>
<keyword id="KW-0694">RNA-binding</keyword>
<keyword id="KW-0699">rRNA-binding</keyword>
<keyword id="KW-0820">tRNA-binding</keyword>
<feature type="chain" id="PRO_1000214632" description="Large ribosomal subunit protein uL5">
    <location>
        <begin position="1"/>
        <end position="179"/>
    </location>
</feature>
<evidence type="ECO:0000255" key="1">
    <source>
        <dbReference type="HAMAP-Rule" id="MF_01333"/>
    </source>
</evidence>
<evidence type="ECO:0000305" key="2"/>
<accession>C5D3S9</accession>
<gene>
    <name evidence="1" type="primary">rplE</name>
    <name type="ordered locus">GWCH70_0123</name>
</gene>
<protein>
    <recommendedName>
        <fullName evidence="1">Large ribosomal subunit protein uL5</fullName>
    </recommendedName>
    <alternativeName>
        <fullName evidence="2">50S ribosomal protein L5</fullName>
    </alternativeName>
</protein>
<name>RL5_GEOSW</name>
<sequence>MNRLKEKYLKEVTPALMSKFNYKSIMQVPKIEKIVINMGVGDAVQNPKALDSAVEELTLIAGQKPVVTRAKKSIAGFRLRAGMPIGAKVTLRGERMYDFLDKLISVSLPRVRDFRGVSKKSFDGRGNYTLGIKEQLIFPEIDYDKVNKVRGMDIVIVTTAKTDEEARELLTLLGMPFQK</sequence>